<organism>
    <name type="scientific">Staphylococcus aureus (strain COL)</name>
    <dbReference type="NCBI Taxonomy" id="93062"/>
    <lineage>
        <taxon>Bacteria</taxon>
        <taxon>Bacillati</taxon>
        <taxon>Bacillota</taxon>
        <taxon>Bacilli</taxon>
        <taxon>Bacillales</taxon>
        <taxon>Staphylococcaceae</taxon>
        <taxon>Staphylococcus</taxon>
    </lineage>
</organism>
<proteinExistence type="inferred from homology"/>
<gene>
    <name evidence="1" type="primary">recO</name>
    <name type="ordered locus">SACOL1623</name>
</gene>
<accession>Q5HFJ4</accession>
<sequence length="250" mass="28450">MLMRQKGIIIKAVDYGESDKIITILNEHGAKVPLMARRAKKVKTGLQAQTQLFVYGLFIYNQWRGMGTLNSVDVISQHYKLQMDLYVSSYAALAAETIERSMDEGDIAPYNYQLLQFVLEKIESGTSAQLMSVVVMLKCMKRFGFTASFNRCAVSGNDTQADLIGYSFKFDGAISRQEASKDVHAVILSNKTLYLLDVLQKLPIDKMNSLNIHQEIIDEMSDIILMLYREYAGMFFKSQKLINQLKRLEQ</sequence>
<feature type="chain" id="PRO_0000204995" description="DNA repair protein RecO">
    <location>
        <begin position="1"/>
        <end position="250"/>
    </location>
</feature>
<evidence type="ECO:0000255" key="1">
    <source>
        <dbReference type="HAMAP-Rule" id="MF_00201"/>
    </source>
</evidence>
<comment type="function">
    <text evidence="1">Involved in DNA repair and RecF pathway recombination.</text>
</comment>
<comment type="similarity">
    <text evidence="1">Belongs to the RecO family.</text>
</comment>
<name>RECO_STAAC</name>
<reference key="1">
    <citation type="journal article" date="2005" name="J. Bacteriol.">
        <title>Insights on evolution of virulence and resistance from the complete genome analysis of an early methicillin-resistant Staphylococcus aureus strain and a biofilm-producing methicillin-resistant Staphylococcus epidermidis strain.</title>
        <authorList>
            <person name="Gill S.R."/>
            <person name="Fouts D.E."/>
            <person name="Archer G.L."/>
            <person name="Mongodin E.F."/>
            <person name="DeBoy R.T."/>
            <person name="Ravel J."/>
            <person name="Paulsen I.T."/>
            <person name="Kolonay J.F."/>
            <person name="Brinkac L.M."/>
            <person name="Beanan M.J."/>
            <person name="Dodson R.J."/>
            <person name="Daugherty S.C."/>
            <person name="Madupu R."/>
            <person name="Angiuoli S.V."/>
            <person name="Durkin A.S."/>
            <person name="Haft D.H."/>
            <person name="Vamathevan J.J."/>
            <person name="Khouri H."/>
            <person name="Utterback T.R."/>
            <person name="Lee C."/>
            <person name="Dimitrov G."/>
            <person name="Jiang L."/>
            <person name="Qin H."/>
            <person name="Weidman J."/>
            <person name="Tran K."/>
            <person name="Kang K.H."/>
            <person name="Hance I.R."/>
            <person name="Nelson K.E."/>
            <person name="Fraser C.M."/>
        </authorList>
    </citation>
    <scope>NUCLEOTIDE SEQUENCE [LARGE SCALE GENOMIC DNA]</scope>
    <source>
        <strain>COL</strain>
    </source>
</reference>
<dbReference type="EMBL" id="CP000046">
    <property type="protein sequence ID" value="AAW38239.1"/>
    <property type="molecule type" value="Genomic_DNA"/>
</dbReference>
<dbReference type="SMR" id="Q5HFJ4"/>
<dbReference type="KEGG" id="sac:SACOL1623"/>
<dbReference type="HOGENOM" id="CLU_066632_4_0_9"/>
<dbReference type="Proteomes" id="UP000000530">
    <property type="component" value="Chromosome"/>
</dbReference>
<dbReference type="GO" id="GO:0043590">
    <property type="term" value="C:bacterial nucleoid"/>
    <property type="evidence" value="ECO:0007669"/>
    <property type="project" value="TreeGrafter"/>
</dbReference>
<dbReference type="GO" id="GO:0006310">
    <property type="term" value="P:DNA recombination"/>
    <property type="evidence" value="ECO:0007669"/>
    <property type="project" value="UniProtKB-UniRule"/>
</dbReference>
<dbReference type="GO" id="GO:0006302">
    <property type="term" value="P:double-strand break repair"/>
    <property type="evidence" value="ECO:0007669"/>
    <property type="project" value="TreeGrafter"/>
</dbReference>
<dbReference type="Gene3D" id="2.40.50.140">
    <property type="entry name" value="Nucleic acid-binding proteins"/>
    <property type="match status" value="1"/>
</dbReference>
<dbReference type="Gene3D" id="1.20.1440.120">
    <property type="entry name" value="Recombination protein O, C-terminal domain"/>
    <property type="match status" value="1"/>
</dbReference>
<dbReference type="HAMAP" id="MF_00201">
    <property type="entry name" value="RecO"/>
    <property type="match status" value="1"/>
</dbReference>
<dbReference type="InterPro" id="IPR037278">
    <property type="entry name" value="ARFGAP/RecO"/>
</dbReference>
<dbReference type="InterPro" id="IPR022572">
    <property type="entry name" value="DNA_rep/recomb_RecO_N"/>
</dbReference>
<dbReference type="InterPro" id="IPR012340">
    <property type="entry name" value="NA-bd_OB-fold"/>
</dbReference>
<dbReference type="InterPro" id="IPR003717">
    <property type="entry name" value="RecO"/>
</dbReference>
<dbReference type="InterPro" id="IPR042242">
    <property type="entry name" value="RecO_C"/>
</dbReference>
<dbReference type="NCBIfam" id="TIGR00613">
    <property type="entry name" value="reco"/>
    <property type="match status" value="1"/>
</dbReference>
<dbReference type="PANTHER" id="PTHR33991">
    <property type="entry name" value="DNA REPAIR PROTEIN RECO"/>
    <property type="match status" value="1"/>
</dbReference>
<dbReference type="PANTHER" id="PTHR33991:SF1">
    <property type="entry name" value="DNA REPAIR PROTEIN RECO"/>
    <property type="match status" value="1"/>
</dbReference>
<dbReference type="Pfam" id="PF02565">
    <property type="entry name" value="RecO_C"/>
    <property type="match status" value="1"/>
</dbReference>
<dbReference type="Pfam" id="PF11967">
    <property type="entry name" value="RecO_N"/>
    <property type="match status" value="1"/>
</dbReference>
<dbReference type="SUPFAM" id="SSF57863">
    <property type="entry name" value="ArfGap/RecO-like zinc finger"/>
    <property type="match status" value="1"/>
</dbReference>
<dbReference type="SUPFAM" id="SSF50249">
    <property type="entry name" value="Nucleic acid-binding proteins"/>
    <property type="match status" value="1"/>
</dbReference>
<protein>
    <recommendedName>
        <fullName evidence="1">DNA repair protein RecO</fullName>
    </recommendedName>
    <alternativeName>
        <fullName evidence="1">Recombination protein O</fullName>
    </alternativeName>
</protein>
<keyword id="KW-0227">DNA damage</keyword>
<keyword id="KW-0233">DNA recombination</keyword>
<keyword id="KW-0234">DNA repair</keyword>